<dbReference type="EMBL" id="CP001103">
    <property type="protein sequence ID" value="AEA97797.1"/>
    <property type="molecule type" value="Genomic_DNA"/>
</dbReference>
<dbReference type="RefSeq" id="WP_012518129.1">
    <property type="nucleotide sequence ID" value="NC_011138.3"/>
</dbReference>
<dbReference type="SMR" id="B4RS41"/>
<dbReference type="GeneID" id="56342069"/>
<dbReference type="KEGG" id="amc:MADE_1008285"/>
<dbReference type="HOGENOM" id="CLU_105066_1_3_6"/>
<dbReference type="Proteomes" id="UP000001870">
    <property type="component" value="Chromosome"/>
</dbReference>
<dbReference type="GO" id="GO:0005829">
    <property type="term" value="C:cytosol"/>
    <property type="evidence" value="ECO:0007669"/>
    <property type="project" value="TreeGrafter"/>
</dbReference>
<dbReference type="GO" id="GO:0003677">
    <property type="term" value="F:DNA binding"/>
    <property type="evidence" value="ECO:0007669"/>
    <property type="project" value="UniProtKB-UniRule"/>
</dbReference>
<dbReference type="GO" id="GO:0030527">
    <property type="term" value="F:structural constituent of chromatin"/>
    <property type="evidence" value="ECO:0007669"/>
    <property type="project" value="InterPro"/>
</dbReference>
<dbReference type="GO" id="GO:0006310">
    <property type="term" value="P:DNA recombination"/>
    <property type="evidence" value="ECO:0007669"/>
    <property type="project" value="UniProtKB-UniRule"/>
</dbReference>
<dbReference type="GO" id="GO:0009893">
    <property type="term" value="P:positive regulation of metabolic process"/>
    <property type="evidence" value="ECO:0007669"/>
    <property type="project" value="UniProtKB-ARBA"/>
</dbReference>
<dbReference type="GO" id="GO:0006355">
    <property type="term" value="P:regulation of DNA-templated transcription"/>
    <property type="evidence" value="ECO:0007669"/>
    <property type="project" value="UniProtKB-UniRule"/>
</dbReference>
<dbReference type="GO" id="GO:0006417">
    <property type="term" value="P:regulation of translation"/>
    <property type="evidence" value="ECO:0007669"/>
    <property type="project" value="UniProtKB-UniRule"/>
</dbReference>
<dbReference type="CDD" id="cd13835">
    <property type="entry name" value="IHF_A"/>
    <property type="match status" value="1"/>
</dbReference>
<dbReference type="FunFam" id="4.10.520.10:FF:000002">
    <property type="entry name" value="Integration host factor subunit alpha"/>
    <property type="match status" value="1"/>
</dbReference>
<dbReference type="Gene3D" id="4.10.520.10">
    <property type="entry name" value="IHF-like DNA-binding proteins"/>
    <property type="match status" value="1"/>
</dbReference>
<dbReference type="HAMAP" id="MF_00380">
    <property type="entry name" value="IHF_alpha"/>
    <property type="match status" value="1"/>
</dbReference>
<dbReference type="InterPro" id="IPR000119">
    <property type="entry name" value="Hist_DNA-bd"/>
</dbReference>
<dbReference type="InterPro" id="IPR020816">
    <property type="entry name" value="Histone-like_DNA-bd_CS"/>
</dbReference>
<dbReference type="InterPro" id="IPR010992">
    <property type="entry name" value="IHF-like_DNA-bd_dom_sf"/>
</dbReference>
<dbReference type="InterPro" id="IPR005684">
    <property type="entry name" value="IHF_alpha"/>
</dbReference>
<dbReference type="NCBIfam" id="TIGR00987">
    <property type="entry name" value="himA"/>
    <property type="match status" value="1"/>
</dbReference>
<dbReference type="NCBIfam" id="NF001401">
    <property type="entry name" value="PRK00285.1"/>
    <property type="match status" value="1"/>
</dbReference>
<dbReference type="PANTHER" id="PTHR33175">
    <property type="entry name" value="DNA-BINDING PROTEIN HU"/>
    <property type="match status" value="1"/>
</dbReference>
<dbReference type="PANTHER" id="PTHR33175:SF2">
    <property type="entry name" value="INTEGRATION HOST FACTOR SUBUNIT ALPHA"/>
    <property type="match status" value="1"/>
</dbReference>
<dbReference type="Pfam" id="PF00216">
    <property type="entry name" value="Bac_DNA_binding"/>
    <property type="match status" value="1"/>
</dbReference>
<dbReference type="PRINTS" id="PR01727">
    <property type="entry name" value="DNABINDINGHU"/>
</dbReference>
<dbReference type="SMART" id="SM00411">
    <property type="entry name" value="BHL"/>
    <property type="match status" value="1"/>
</dbReference>
<dbReference type="SUPFAM" id="SSF47729">
    <property type="entry name" value="IHF-like DNA-binding proteins"/>
    <property type="match status" value="1"/>
</dbReference>
<dbReference type="PROSITE" id="PS00045">
    <property type="entry name" value="HISTONE_LIKE"/>
    <property type="match status" value="1"/>
</dbReference>
<organism>
    <name type="scientific">Alteromonas mediterranea (strain DSM 17117 / CIP 110805 / LMG 28347 / Deep ecotype)</name>
    <dbReference type="NCBI Taxonomy" id="1774373"/>
    <lineage>
        <taxon>Bacteria</taxon>
        <taxon>Pseudomonadati</taxon>
        <taxon>Pseudomonadota</taxon>
        <taxon>Gammaproteobacteria</taxon>
        <taxon>Alteromonadales</taxon>
        <taxon>Alteromonadaceae</taxon>
        <taxon>Alteromonas/Salinimonas group</taxon>
        <taxon>Alteromonas</taxon>
    </lineage>
</organism>
<protein>
    <recommendedName>
        <fullName evidence="1">Integration host factor subunit alpha</fullName>
        <shortName evidence="1">IHF-alpha</shortName>
    </recommendedName>
</protein>
<feature type="chain" id="PRO_1000122128" description="Integration host factor subunit alpha">
    <location>
        <begin position="1"/>
        <end position="99"/>
    </location>
</feature>
<reference key="1">
    <citation type="journal article" date="2008" name="ISME J.">
        <title>Comparative genomics of two ecotypes of the marine planktonic copiotroph Alteromonas macleodii suggests alternative lifestyles associated with different kinds of particulate organic matter.</title>
        <authorList>
            <person name="Ivars-Martinez E."/>
            <person name="Martin-Cuadrado A.-B."/>
            <person name="D'Auria G."/>
            <person name="Mira A."/>
            <person name="Ferriera S."/>
            <person name="Johnson J."/>
            <person name="Friedman R."/>
            <person name="Rodriguez-Valera F."/>
        </authorList>
    </citation>
    <scope>NUCLEOTIDE SEQUENCE [LARGE SCALE GENOMIC DNA]</scope>
    <source>
        <strain>DSM 17117 / CIP 110805 / LMG 28347 / Deep ecotype</strain>
    </source>
</reference>
<accession>B4RS41</accession>
<accession>F2G9B8</accession>
<gene>
    <name evidence="1" type="primary">ihfA</name>
    <name evidence="1" type="synonym">himA</name>
    <name type="ordered locus">MADE_1008285</name>
</gene>
<keyword id="KW-0233">DNA recombination</keyword>
<keyword id="KW-0238">DNA-binding</keyword>
<keyword id="KW-0804">Transcription</keyword>
<keyword id="KW-0805">Transcription regulation</keyword>
<keyword id="KW-0810">Translation regulation</keyword>
<comment type="function">
    <text evidence="1">This protein is one of the two subunits of integration host factor, a specific DNA-binding protein that functions in genetic recombination as well as in transcriptional and translational control.</text>
</comment>
<comment type="subunit">
    <text evidence="1">Heterodimer of an alpha and a beta chain.</text>
</comment>
<comment type="similarity">
    <text evidence="1">Belongs to the bacterial histone-like protein family.</text>
</comment>
<sequence>MALTKAEMAEHLFEKLGINKRDAKDLVELFFEEIKGALESGEQVKLSGFGNFDLRDKNERPGRNPKTGEDIPIKARRVVTFRPGQKLKSRVENSEPVDQ</sequence>
<proteinExistence type="inferred from homology"/>
<name>IHFA_ALTMD</name>
<evidence type="ECO:0000255" key="1">
    <source>
        <dbReference type="HAMAP-Rule" id="MF_00380"/>
    </source>
</evidence>